<comment type="function">
    <text evidence="1 3 4">A minor shell protein of the bacterial microcompartment (BMC) dedicated to 1,2-propanediol (1,2-PD) degradation. Overexpression of this protein leads to cells with either deposits or having lamina-like structures in the cytoplasm (PubMed:18332146). Not absolutely required to make artificial BMCs (PubMed:20417607). May selectively transport specific metabolites (By similarity).</text>
</comment>
<comment type="function">
    <text evidence="3">Expression of a cosmid containing the full 21-gene pdu operon in E.coli allows E.coli to grow on 1,2-propanediol (1,2-PD) with the appearance of bacterial microcompartments (BMC) in its cytoplasm.</text>
</comment>
<comment type="function">
    <text evidence="10">The 1,2-PD-specific bacterial microcompartment (BMC) concentrates low levels of 1,2-PD catabolic enzymes, concentrates volatile reaction intermediates thus enhancing pathway flux and keeps the level of toxic, mutagenic propionaldehyde low.</text>
</comment>
<comment type="cofactor">
    <cofactor evidence="3 11">
        <name>[4Fe-4S] cluster</name>
        <dbReference type="ChEBI" id="CHEBI:49883"/>
    </cofactor>
    <text evidence="6 9 11">Seems to be bound by a single Cys residue from each of 4 subunits (Probable). 3 ligands are provided by each trimer, the fourth ligand could potentially bind another protein (Probable). The cluster is accessible from both sides of the trimer (PubMed:21245529).</text>
</comment>
<comment type="biophysicochemical properties">
    <redoxPotential>
        <text evidence="3">E(0) is +99 mV.</text>
    </redoxPotential>
</comment>
<comment type="pathway">
    <text evidence="3">Polyol metabolism; 1,2-propanediol degradation.</text>
</comment>
<comment type="subunit">
    <text evidence="5 6 9">Homotrimerizes to form a pseudohexamer with a large central pore, which is probably the binding site for the [4Fe-4S] center (PubMed:21245529). Interacts with PduS (PubMed:21103360). Originally suggested to be a homotetramer; this is incorrect (Probable).</text>
</comment>
<comment type="subcellular location">
    <subcellularLocation>
        <location evidence="4 9">Bacterial microcompartment</location>
    </subcellularLocation>
</comment>
<comment type="biotechnology">
    <text evidence="4">Artificial BMCs can be made in E.coli by expressing pduA-pduB/B'-pduJ-pduK-pduN-pduU-pduT (in this order); pduT and pduU are optional, while pduA, pduB/B', pduJ, pduK and pduN are essential. A construct with the reversed gene order does not make BMCs.</text>
</comment>
<comment type="similarity">
    <text evidence="2">Belongs to the bacterial microcompartments protein family.</text>
</comment>
<gene>
    <name evidence="7" type="primary">pduT</name>
</gene>
<dbReference type="EMBL" id="AM498294">
    <property type="protein sequence ID" value="CAM57299.1"/>
    <property type="molecule type" value="Genomic_DNA"/>
</dbReference>
<dbReference type="RefSeq" id="WP_003030201.1">
    <property type="nucleotide sequence ID" value="NZ_VKMY01000021.1"/>
</dbReference>
<dbReference type="PDB" id="3PAC">
    <property type="method" value="X-ray"/>
    <property type="resolution" value="1.86 A"/>
    <property type="chains" value="A=1-184"/>
</dbReference>
<dbReference type="PDBsum" id="3PAC"/>
<dbReference type="SMR" id="P0DUV7"/>
<dbReference type="GeneID" id="89548308"/>
<dbReference type="OrthoDB" id="9791973at2"/>
<dbReference type="UniPathway" id="UPA00621"/>
<dbReference type="GO" id="GO:0031469">
    <property type="term" value="C:bacterial microcompartment"/>
    <property type="evidence" value="ECO:0007669"/>
    <property type="project" value="UniProtKB-SubCell"/>
</dbReference>
<dbReference type="GO" id="GO:0051539">
    <property type="term" value="F:4 iron, 4 sulfur cluster binding"/>
    <property type="evidence" value="ECO:0007669"/>
    <property type="project" value="UniProtKB-KW"/>
</dbReference>
<dbReference type="GO" id="GO:0046872">
    <property type="term" value="F:metal ion binding"/>
    <property type="evidence" value="ECO:0007669"/>
    <property type="project" value="UniProtKB-KW"/>
</dbReference>
<dbReference type="GO" id="GO:0051144">
    <property type="term" value="P:propanediol catabolic process"/>
    <property type="evidence" value="ECO:0007669"/>
    <property type="project" value="UniProtKB-UniPathway"/>
</dbReference>
<dbReference type="CDD" id="cd07053">
    <property type="entry name" value="BMC_PduT_repeat1"/>
    <property type="match status" value="1"/>
</dbReference>
<dbReference type="CDD" id="cd07054">
    <property type="entry name" value="BMC_PduT_repeat2"/>
    <property type="match status" value="1"/>
</dbReference>
<dbReference type="Gene3D" id="3.30.70.1710">
    <property type="match status" value="2"/>
</dbReference>
<dbReference type="InterPro" id="IPR000249">
    <property type="entry name" value="BMC_dom"/>
</dbReference>
<dbReference type="InterPro" id="IPR050575">
    <property type="entry name" value="BMC_shell"/>
</dbReference>
<dbReference type="InterPro" id="IPR037233">
    <property type="entry name" value="CcmK-like_sf"/>
</dbReference>
<dbReference type="InterPro" id="IPR044872">
    <property type="entry name" value="CcmK/CsoS1_BMC"/>
</dbReference>
<dbReference type="InterPro" id="IPR011238">
    <property type="entry name" value="Micro_shell_prot_PduT"/>
</dbReference>
<dbReference type="PANTHER" id="PTHR33941:SF11">
    <property type="entry name" value="BACTERIAL MICROCOMPARTMENT SHELL PROTEIN PDUJ"/>
    <property type="match status" value="1"/>
</dbReference>
<dbReference type="PANTHER" id="PTHR33941">
    <property type="entry name" value="PROPANEDIOL UTILIZATION PROTEIN PDUA"/>
    <property type="match status" value="1"/>
</dbReference>
<dbReference type="Pfam" id="PF00936">
    <property type="entry name" value="BMC"/>
    <property type="match status" value="2"/>
</dbReference>
<dbReference type="PIRSF" id="PIRSF034834">
    <property type="entry name" value="PduT"/>
    <property type="match status" value="1"/>
</dbReference>
<dbReference type="SMART" id="SM00877">
    <property type="entry name" value="BMC"/>
    <property type="match status" value="2"/>
</dbReference>
<dbReference type="SUPFAM" id="SSF143414">
    <property type="entry name" value="CcmK-like"/>
    <property type="match status" value="2"/>
</dbReference>
<dbReference type="PROSITE" id="PS51930">
    <property type="entry name" value="BMC_2"/>
    <property type="match status" value="2"/>
</dbReference>
<proteinExistence type="evidence at protein level"/>
<protein>
    <recommendedName>
        <fullName evidence="7">Bacterial microcompartment shell protein PduT</fullName>
    </recommendedName>
    <alternativeName>
        <fullName evidence="8">Bacterial microcompartment protein homotrimer</fullName>
        <shortName evidence="8">BMC-T</shortName>
    </alternativeName>
    <alternativeName>
        <fullName>Propanediol utilization protein PduT</fullName>
    </alternativeName>
</protein>
<feature type="chain" id="PRO_0000454255" description="Bacterial microcompartment shell protein PduT">
    <location>
        <begin position="1"/>
        <end position="184"/>
    </location>
</feature>
<feature type="domain" description="BMC 1" evidence="2">
    <location>
        <begin position="4"/>
        <end position="86"/>
    </location>
</feature>
<feature type="domain" description="BMC 2" evidence="2">
    <location>
        <begin position="96"/>
        <end position="182"/>
    </location>
</feature>
<feature type="binding site" evidence="3">
    <location>
        <position position="38"/>
    </location>
    <ligand>
        <name>[4Fe-4S] cluster</name>
        <dbReference type="ChEBI" id="CHEBI:49883"/>
    </ligand>
</feature>
<feature type="mutagenesis site" description="Loss of 4Fe-4S center." evidence="3">
    <original>C</original>
    <variation>A</variation>
    <location>
        <position position="38"/>
    </location>
</feature>
<feature type="mutagenesis site" description="Retains 4Fe-4S center." evidence="3">
    <original>C</original>
    <variation>A</variation>
    <location>
        <position position="108"/>
    </location>
</feature>
<feature type="mutagenesis site" description="Retains 4Fe-4S center." evidence="3">
    <original>C</original>
    <variation>A</variation>
    <location>
        <position position="136"/>
    </location>
</feature>
<keyword id="KW-0002">3D-structure</keyword>
<keyword id="KW-0004">4Fe-4S</keyword>
<keyword id="KW-1283">Bacterial microcompartment</keyword>
<keyword id="KW-0408">Iron</keyword>
<keyword id="KW-0411">Iron-sulfur</keyword>
<keyword id="KW-0479">Metal-binding</keyword>
<keyword id="KW-0813">Transport</keyword>
<organism>
    <name type="scientific">Citrobacter freundii</name>
    <dbReference type="NCBI Taxonomy" id="546"/>
    <lineage>
        <taxon>Bacteria</taxon>
        <taxon>Pseudomonadati</taxon>
        <taxon>Pseudomonadota</taxon>
        <taxon>Gammaproteobacteria</taxon>
        <taxon>Enterobacterales</taxon>
        <taxon>Enterobacteriaceae</taxon>
        <taxon>Citrobacter</taxon>
        <taxon>Citrobacter freundii complex</taxon>
    </lineage>
</organism>
<accession>P0DUV7</accession>
<evidence type="ECO:0000250" key="1">
    <source>
        <dbReference type="UniProtKB" id="Q9XDM8"/>
    </source>
</evidence>
<evidence type="ECO:0000255" key="2">
    <source>
        <dbReference type="PROSITE-ProRule" id="PRU01278"/>
    </source>
</evidence>
<evidence type="ECO:0000269" key="3">
    <source>
    </source>
</evidence>
<evidence type="ECO:0000269" key="4">
    <source>
    </source>
</evidence>
<evidence type="ECO:0000269" key="5">
    <source>
    </source>
</evidence>
<evidence type="ECO:0000269" key="6">
    <source>
    </source>
</evidence>
<evidence type="ECO:0000303" key="7">
    <source>
    </source>
</evidence>
<evidence type="ECO:0000305" key="8"/>
<evidence type="ECO:0000305" key="9">
    <source>
    </source>
</evidence>
<evidence type="ECO:0000305" key="10">
    <source>
    </source>
</evidence>
<evidence type="ECO:0000305" key="11">
    <source>
    </source>
</evidence>
<evidence type="ECO:0007744" key="12">
    <source>
        <dbReference type="PDB" id="3PAC"/>
    </source>
</evidence>
<name>PDUT_CITFR</name>
<reference key="1">
    <citation type="journal article" date="2008" name="J. Biol. Chem.">
        <title>Biochemical and Structural Insights into Bacterial Organelle Form and Biogenesis.</title>
        <authorList>
            <person name="Parsons J.B."/>
            <person name="Dinesh S.D."/>
            <person name="Deery E."/>
            <person name="Leech H.K."/>
            <person name="Brindley A.A."/>
            <person name="Heldt D."/>
            <person name="Frank S."/>
            <person name="Smales C.M."/>
            <person name="Lunsdorf H."/>
            <person name="Rambach A."/>
            <person name="Gass M.H."/>
            <person name="Bleloch A."/>
            <person name="McClean K.J."/>
            <person name="Munro A.W."/>
            <person name="Rigby S.E.J."/>
            <person name="Warren M.J."/>
            <person name="Prentice M.B."/>
        </authorList>
    </citation>
    <scope>NUCLEOTIDE SEQUENCE [GENOMIC DNA]</scope>
    <scope>FUNCTION</scope>
    <scope>COFACTOR</scope>
    <scope>BIOPHYSICOCHEMICAL PROPERTIES</scope>
    <scope>PATHWAY</scope>
    <scope>SUBUNIT</scope>
    <scope>SUBCELLULAR LOCATION</scope>
    <scope>MUTAGENESIS OF CYS-38; CYS-108 AND CYS-136</scope>
</reference>
<reference key="2">
    <citation type="journal article" date="2010" name="Mol. Cell">
        <title>Synthesis of empty bacterial microcompartments, directed organelle protein incorporation, and evidence of filament-associated organelle movement.</title>
        <authorList>
            <person name="Parsons J.B."/>
            <person name="Frank S."/>
            <person name="Bhella D."/>
            <person name="Liang M."/>
            <person name="Prentice M.B."/>
            <person name="Mulvihill D.P."/>
            <person name="Warren M.J."/>
        </authorList>
    </citation>
    <scope>FUNCTION</scope>
    <scope>SUBCELLULAR LOCATION</scope>
    <scope>BIOTECHNOLOGY</scope>
</reference>
<reference key="3">
    <citation type="journal article" date="2010" name="PLoS ONE">
        <title>Characterisation of PduS, the pdu metabolosome corrin reductase, and evidence of substructural organisation within the bacterial microcompartment.</title>
        <authorList>
            <person name="Parsons J.B."/>
            <person name="Lawrence A.D."/>
            <person name="McLean K.J."/>
            <person name="Munro A.W."/>
            <person name="Rigby S.E."/>
            <person name="Warren M.J."/>
        </authorList>
    </citation>
    <scope>INTERACTION WITH PDUS</scope>
</reference>
<reference evidence="12" key="4">
    <citation type="journal article" date="2011" name="Acta Crystallogr. D">
        <title>Structure of PduT, a trimeric bacterial microcompartment protein with a 4Fe-4S cluster-binding site.</title>
        <authorList>
            <person name="Pang A."/>
            <person name="Warren M.J."/>
            <person name="Pickersgill R.W."/>
        </authorList>
    </citation>
    <scope>X-RAY CRYSTALLOGRAPHY (1.86 ANGSTROMS)</scope>
    <scope>COFACTOR</scope>
    <scope>SUBUNIT</scope>
</reference>
<sequence length="184" mass="19038">MSQAIGILELTSIAKGMEAGDAMLKSANVNLLVSKTICPGKFLLMLGGDVGAVQQAIATGTSLAGDMLVDSLVLPNIHASVLPAISGLNSVDKRQAVGIVETWSVAACICAADRAVKASNVTLVRVHMAFGIGGKCYMVVAGDVSDVNNAVTVASESAGEKGLLVYRSVIPRPHESMWRQMVEG</sequence>